<name>KLF14_GORGO</name>
<comment type="subcellular location">
    <subcellularLocation>
        <location evidence="1">Nucleus</location>
    </subcellularLocation>
</comment>
<comment type="similarity">
    <text evidence="4">Belongs to the Sp1 C2H2-type zinc-finger protein family.</text>
</comment>
<evidence type="ECO:0000250" key="1"/>
<evidence type="ECO:0000255" key="2">
    <source>
        <dbReference type="PROSITE-ProRule" id="PRU00042"/>
    </source>
</evidence>
<evidence type="ECO:0000256" key="3">
    <source>
        <dbReference type="SAM" id="MobiDB-lite"/>
    </source>
</evidence>
<evidence type="ECO:0000305" key="4"/>
<reference key="1">
    <citation type="submission" date="2006-06" db="EMBL/GenBank/DDBJ databases">
        <title>The centre for applied genomics genome annotation project.</title>
        <authorList>
            <person name="Parker-Katiraee L."/>
            <person name="Scherer S.W."/>
        </authorList>
    </citation>
    <scope>NUCLEOTIDE SEQUENCE [GENOMIC DNA]</scope>
</reference>
<proteinExistence type="inferred from homology"/>
<dbReference type="EMBL" id="DQ677660">
    <property type="protein sequence ID" value="ABG36121.1"/>
    <property type="molecule type" value="Genomic_DNA"/>
</dbReference>
<dbReference type="RefSeq" id="XP_030869289.1">
    <property type="nucleotide sequence ID" value="XM_031013429.3"/>
</dbReference>
<dbReference type="SMR" id="Q14V87"/>
<dbReference type="FunCoup" id="Q14V87">
    <property type="interactions" value="88"/>
</dbReference>
<dbReference type="STRING" id="9593.ENSGGOP00000025604"/>
<dbReference type="GeneID" id="101134239"/>
<dbReference type="eggNOG" id="KOG1721">
    <property type="taxonomic scope" value="Eukaryota"/>
</dbReference>
<dbReference type="InParanoid" id="Q14V87"/>
<dbReference type="Proteomes" id="UP000001519">
    <property type="component" value="Unplaced"/>
</dbReference>
<dbReference type="GO" id="GO:0005634">
    <property type="term" value="C:nucleus"/>
    <property type="evidence" value="ECO:0007669"/>
    <property type="project" value="UniProtKB-SubCell"/>
</dbReference>
<dbReference type="GO" id="GO:0000981">
    <property type="term" value="F:DNA-binding transcription factor activity, RNA polymerase II-specific"/>
    <property type="evidence" value="ECO:0000318"/>
    <property type="project" value="GO_Central"/>
</dbReference>
<dbReference type="GO" id="GO:0000978">
    <property type="term" value="F:RNA polymerase II cis-regulatory region sequence-specific DNA binding"/>
    <property type="evidence" value="ECO:0000318"/>
    <property type="project" value="GO_Central"/>
</dbReference>
<dbReference type="GO" id="GO:0008270">
    <property type="term" value="F:zinc ion binding"/>
    <property type="evidence" value="ECO:0007669"/>
    <property type="project" value="UniProtKB-KW"/>
</dbReference>
<dbReference type="GO" id="GO:0006357">
    <property type="term" value="P:regulation of transcription by RNA polymerase II"/>
    <property type="evidence" value="ECO:0000318"/>
    <property type="project" value="GO_Central"/>
</dbReference>
<dbReference type="CDD" id="cd21576">
    <property type="entry name" value="KLF14_N"/>
    <property type="match status" value="1"/>
</dbReference>
<dbReference type="FunFam" id="3.30.160.60:FF:000595">
    <property type="entry name" value="Krueppel-like factor 14"/>
    <property type="match status" value="1"/>
</dbReference>
<dbReference type="FunFam" id="3.30.160.60:FF:000018">
    <property type="entry name" value="Krueppel-like factor 15"/>
    <property type="match status" value="1"/>
</dbReference>
<dbReference type="FunFam" id="3.30.160.60:FF:000232">
    <property type="entry name" value="Krueppel-like factor 9"/>
    <property type="match status" value="1"/>
</dbReference>
<dbReference type="Gene3D" id="3.30.160.60">
    <property type="entry name" value="Classic Zinc Finger"/>
    <property type="match status" value="3"/>
</dbReference>
<dbReference type="InterPro" id="IPR036236">
    <property type="entry name" value="Znf_C2H2_sf"/>
</dbReference>
<dbReference type="InterPro" id="IPR013087">
    <property type="entry name" value="Znf_C2H2_type"/>
</dbReference>
<dbReference type="PANTHER" id="PTHR23235:SF59">
    <property type="entry name" value="KRUEPPEL-LIKE FACTOR 14"/>
    <property type="match status" value="1"/>
</dbReference>
<dbReference type="PANTHER" id="PTHR23235">
    <property type="entry name" value="KRUEPPEL-LIKE TRANSCRIPTION FACTOR"/>
    <property type="match status" value="1"/>
</dbReference>
<dbReference type="Pfam" id="PF00096">
    <property type="entry name" value="zf-C2H2"/>
    <property type="match status" value="3"/>
</dbReference>
<dbReference type="SMART" id="SM00355">
    <property type="entry name" value="ZnF_C2H2"/>
    <property type="match status" value="3"/>
</dbReference>
<dbReference type="SUPFAM" id="SSF57667">
    <property type="entry name" value="beta-beta-alpha zinc fingers"/>
    <property type="match status" value="2"/>
</dbReference>
<dbReference type="PROSITE" id="PS00028">
    <property type="entry name" value="ZINC_FINGER_C2H2_1"/>
    <property type="match status" value="3"/>
</dbReference>
<dbReference type="PROSITE" id="PS50157">
    <property type="entry name" value="ZINC_FINGER_C2H2_2"/>
    <property type="match status" value="3"/>
</dbReference>
<gene>
    <name type="primary">KLF14</name>
</gene>
<protein>
    <recommendedName>
        <fullName>Krueppel-like factor 14</fullName>
    </recommendedName>
</protein>
<feature type="chain" id="PRO_0000254878" description="Krueppel-like factor 14">
    <location>
        <begin position="1"/>
        <end position="323"/>
    </location>
</feature>
<feature type="zinc finger region" description="C2H2-type 1" evidence="2">
    <location>
        <begin position="195"/>
        <end position="224"/>
    </location>
</feature>
<feature type="zinc finger region" description="C2H2-type 2" evidence="2">
    <location>
        <begin position="225"/>
        <end position="254"/>
    </location>
</feature>
<feature type="zinc finger region" description="C2H2-type 3" evidence="2">
    <location>
        <begin position="255"/>
        <end position="282"/>
    </location>
</feature>
<feature type="region of interest" description="Disordered" evidence="3">
    <location>
        <begin position="27"/>
        <end position="78"/>
    </location>
</feature>
<feature type="region of interest" description="Disordered" evidence="3">
    <location>
        <begin position="94"/>
        <end position="116"/>
    </location>
</feature>
<feature type="region of interest" description="Disordered" evidence="3">
    <location>
        <begin position="142"/>
        <end position="161"/>
    </location>
</feature>
<feature type="region of interest" description="Disordered" evidence="3">
    <location>
        <begin position="166"/>
        <end position="195"/>
    </location>
</feature>
<feature type="region of interest" description="Disordered" evidence="3">
    <location>
        <begin position="279"/>
        <end position="323"/>
    </location>
</feature>
<feature type="compositionally biased region" description="Low complexity" evidence="3">
    <location>
        <begin position="40"/>
        <end position="53"/>
    </location>
</feature>
<feature type="compositionally biased region" description="Pro residues" evidence="3">
    <location>
        <begin position="54"/>
        <end position="73"/>
    </location>
</feature>
<feature type="compositionally biased region" description="Low complexity" evidence="3">
    <location>
        <begin position="94"/>
        <end position="106"/>
    </location>
</feature>
<feature type="compositionally biased region" description="Basic residues" evidence="3">
    <location>
        <begin position="184"/>
        <end position="195"/>
    </location>
</feature>
<accession>Q14V87</accession>
<keyword id="KW-0238">DNA-binding</keyword>
<keyword id="KW-0479">Metal-binding</keyword>
<keyword id="KW-0539">Nucleus</keyword>
<keyword id="KW-1185">Reference proteome</keyword>
<keyword id="KW-0677">Repeat</keyword>
<keyword id="KW-0804">Transcription</keyword>
<keyword id="KW-0805">Transcription regulation</keyword>
<keyword id="KW-0862">Zinc</keyword>
<keyword id="KW-0863">Zinc-finger</keyword>
<sequence>MSAAVACLDYFAAECLVSMSAGAVVHRRPPDPEGAGGAAGSEVGAAPPESALPGPGPPGPASVPPLPQVPAPSPGAGGAAPHLLAASVWADLRGSSGEGSWENSGEAPRASSGFSDPIPCSVQTPCSELAPASGAAAVCAPESSSDAPAVPSAPAAPGAPAASGGFSGGALGAGPAPAADQVPRRRPVTPAAKRHQCPFPGCTKAYYKSSHLKSHQRTHTGERPFSCDWLDCDKKFTRSDELARHYRTHTGEKRFSCPLCPKQFSRSDHLTKHARRHPTYHPDMIEYRGRRRTPRIDPPLTSEVESSASGSGPGPAPSFTTCL</sequence>
<organism>
    <name type="scientific">Gorilla gorilla gorilla</name>
    <name type="common">Western lowland gorilla</name>
    <dbReference type="NCBI Taxonomy" id="9595"/>
    <lineage>
        <taxon>Eukaryota</taxon>
        <taxon>Metazoa</taxon>
        <taxon>Chordata</taxon>
        <taxon>Craniata</taxon>
        <taxon>Vertebrata</taxon>
        <taxon>Euteleostomi</taxon>
        <taxon>Mammalia</taxon>
        <taxon>Eutheria</taxon>
        <taxon>Euarchontoglires</taxon>
        <taxon>Primates</taxon>
        <taxon>Haplorrhini</taxon>
        <taxon>Catarrhini</taxon>
        <taxon>Hominidae</taxon>
        <taxon>Gorilla</taxon>
    </lineage>
</organism>